<protein>
    <recommendedName>
        <fullName evidence="1">Phosphomethylpyrimidine synthase</fullName>
        <ecNumber evidence="1">4.1.99.17</ecNumber>
    </recommendedName>
    <alternativeName>
        <fullName evidence="1">Hydroxymethylpyrimidine phosphate synthase</fullName>
        <shortName evidence="1">HMP-P synthase</shortName>
        <shortName evidence="1">HMP-phosphate synthase</shortName>
        <shortName evidence="1">HMPP synthase</shortName>
    </alternativeName>
    <alternativeName>
        <fullName evidence="1">Thiamine biosynthesis protein ThiC</fullName>
    </alternativeName>
</protein>
<organism>
    <name type="scientific">Aliivibrio fischeri (strain MJ11)</name>
    <name type="common">Vibrio fischeri</name>
    <dbReference type="NCBI Taxonomy" id="388396"/>
    <lineage>
        <taxon>Bacteria</taxon>
        <taxon>Pseudomonadati</taxon>
        <taxon>Pseudomonadota</taxon>
        <taxon>Gammaproteobacteria</taxon>
        <taxon>Vibrionales</taxon>
        <taxon>Vibrionaceae</taxon>
        <taxon>Aliivibrio</taxon>
    </lineage>
</organism>
<accession>B5FF66</accession>
<evidence type="ECO:0000255" key="1">
    <source>
        <dbReference type="HAMAP-Rule" id="MF_00089"/>
    </source>
</evidence>
<evidence type="ECO:0000256" key="2">
    <source>
        <dbReference type="SAM" id="MobiDB-lite"/>
    </source>
</evidence>
<comment type="function">
    <text evidence="1">Catalyzes the synthesis of the hydroxymethylpyrimidine phosphate (HMP-P) moiety of thiamine from aminoimidazole ribotide (AIR) in a radical S-adenosyl-L-methionine (SAM)-dependent reaction.</text>
</comment>
<comment type="catalytic activity">
    <reaction evidence="1">
        <text>5-amino-1-(5-phospho-beta-D-ribosyl)imidazole + S-adenosyl-L-methionine = 4-amino-2-methyl-5-(phosphooxymethyl)pyrimidine + CO + 5'-deoxyadenosine + formate + L-methionine + 3 H(+)</text>
        <dbReference type="Rhea" id="RHEA:24840"/>
        <dbReference type="ChEBI" id="CHEBI:15378"/>
        <dbReference type="ChEBI" id="CHEBI:15740"/>
        <dbReference type="ChEBI" id="CHEBI:17245"/>
        <dbReference type="ChEBI" id="CHEBI:17319"/>
        <dbReference type="ChEBI" id="CHEBI:57844"/>
        <dbReference type="ChEBI" id="CHEBI:58354"/>
        <dbReference type="ChEBI" id="CHEBI:59789"/>
        <dbReference type="ChEBI" id="CHEBI:137981"/>
        <dbReference type="EC" id="4.1.99.17"/>
    </reaction>
</comment>
<comment type="cofactor">
    <cofactor evidence="1">
        <name>[4Fe-4S] cluster</name>
        <dbReference type="ChEBI" id="CHEBI:49883"/>
    </cofactor>
    <text evidence="1">Binds 1 [4Fe-4S] cluster per subunit. The cluster is coordinated with 3 cysteines and an exchangeable S-adenosyl-L-methionine.</text>
</comment>
<comment type="pathway">
    <text evidence="1">Cofactor biosynthesis; thiamine diphosphate biosynthesis.</text>
</comment>
<comment type="subunit">
    <text evidence="1">Homodimer.</text>
</comment>
<comment type="similarity">
    <text evidence="1">Belongs to the ThiC family.</text>
</comment>
<keyword id="KW-0004">4Fe-4S</keyword>
<keyword id="KW-0408">Iron</keyword>
<keyword id="KW-0411">Iron-sulfur</keyword>
<keyword id="KW-0456">Lyase</keyword>
<keyword id="KW-0479">Metal-binding</keyword>
<keyword id="KW-0949">S-adenosyl-L-methionine</keyword>
<keyword id="KW-0784">Thiamine biosynthesis</keyword>
<keyword id="KW-0862">Zinc</keyword>
<gene>
    <name evidence="1" type="primary">thiC</name>
    <name type="ordered locus">VFMJ11_0033</name>
</gene>
<name>THIC_ALIFM</name>
<feature type="chain" id="PRO_1000093245" description="Phosphomethylpyrimidine synthase">
    <location>
        <begin position="1"/>
        <end position="644"/>
    </location>
</feature>
<feature type="region of interest" description="Disordered" evidence="2">
    <location>
        <begin position="623"/>
        <end position="644"/>
    </location>
</feature>
<feature type="binding site" evidence="1">
    <location>
        <position position="236"/>
    </location>
    <ligand>
        <name>substrate</name>
    </ligand>
</feature>
<feature type="binding site" evidence="1">
    <location>
        <position position="265"/>
    </location>
    <ligand>
        <name>substrate</name>
    </ligand>
</feature>
<feature type="binding site" evidence="1">
    <location>
        <position position="294"/>
    </location>
    <ligand>
        <name>substrate</name>
    </ligand>
</feature>
<feature type="binding site" evidence="1">
    <location>
        <position position="330"/>
    </location>
    <ligand>
        <name>substrate</name>
    </ligand>
</feature>
<feature type="binding site" evidence="1">
    <location>
        <begin position="350"/>
        <end position="352"/>
    </location>
    <ligand>
        <name>substrate</name>
    </ligand>
</feature>
<feature type="binding site" evidence="1">
    <location>
        <begin position="391"/>
        <end position="394"/>
    </location>
    <ligand>
        <name>substrate</name>
    </ligand>
</feature>
<feature type="binding site" evidence="1">
    <location>
        <position position="430"/>
    </location>
    <ligand>
        <name>substrate</name>
    </ligand>
</feature>
<feature type="binding site" evidence="1">
    <location>
        <position position="434"/>
    </location>
    <ligand>
        <name>Zn(2+)</name>
        <dbReference type="ChEBI" id="CHEBI:29105"/>
    </ligand>
</feature>
<feature type="binding site" evidence="1">
    <location>
        <position position="457"/>
    </location>
    <ligand>
        <name>substrate</name>
    </ligand>
</feature>
<feature type="binding site" evidence="1">
    <location>
        <position position="498"/>
    </location>
    <ligand>
        <name>Zn(2+)</name>
        <dbReference type="ChEBI" id="CHEBI:29105"/>
    </ligand>
</feature>
<feature type="binding site" evidence="1">
    <location>
        <position position="578"/>
    </location>
    <ligand>
        <name>[4Fe-4S] cluster</name>
        <dbReference type="ChEBI" id="CHEBI:49883"/>
        <note>4Fe-4S-S-AdoMet</note>
    </ligand>
</feature>
<feature type="binding site" evidence="1">
    <location>
        <position position="581"/>
    </location>
    <ligand>
        <name>[4Fe-4S] cluster</name>
        <dbReference type="ChEBI" id="CHEBI:49883"/>
        <note>4Fe-4S-S-AdoMet</note>
    </ligand>
</feature>
<feature type="binding site" evidence="1">
    <location>
        <position position="586"/>
    </location>
    <ligand>
        <name>[4Fe-4S] cluster</name>
        <dbReference type="ChEBI" id="CHEBI:49883"/>
        <note>4Fe-4S-S-AdoMet</note>
    </ligand>
</feature>
<dbReference type="EC" id="4.1.99.17" evidence="1"/>
<dbReference type="EMBL" id="CP001139">
    <property type="protein sequence ID" value="ACH64844.1"/>
    <property type="molecule type" value="Genomic_DNA"/>
</dbReference>
<dbReference type="RefSeq" id="WP_012532655.1">
    <property type="nucleotide sequence ID" value="NC_011184.1"/>
</dbReference>
<dbReference type="SMR" id="B5FF66"/>
<dbReference type="KEGG" id="vfm:VFMJ11_0033"/>
<dbReference type="HOGENOM" id="CLU_013181_2_1_6"/>
<dbReference type="UniPathway" id="UPA00060"/>
<dbReference type="Proteomes" id="UP000001857">
    <property type="component" value="Chromosome I"/>
</dbReference>
<dbReference type="GO" id="GO:0005829">
    <property type="term" value="C:cytosol"/>
    <property type="evidence" value="ECO:0007669"/>
    <property type="project" value="TreeGrafter"/>
</dbReference>
<dbReference type="GO" id="GO:0051539">
    <property type="term" value="F:4 iron, 4 sulfur cluster binding"/>
    <property type="evidence" value="ECO:0007669"/>
    <property type="project" value="UniProtKB-KW"/>
</dbReference>
<dbReference type="GO" id="GO:0016830">
    <property type="term" value="F:carbon-carbon lyase activity"/>
    <property type="evidence" value="ECO:0007669"/>
    <property type="project" value="InterPro"/>
</dbReference>
<dbReference type="GO" id="GO:0008270">
    <property type="term" value="F:zinc ion binding"/>
    <property type="evidence" value="ECO:0007669"/>
    <property type="project" value="UniProtKB-UniRule"/>
</dbReference>
<dbReference type="GO" id="GO:0009228">
    <property type="term" value="P:thiamine biosynthetic process"/>
    <property type="evidence" value="ECO:0007669"/>
    <property type="project" value="UniProtKB-KW"/>
</dbReference>
<dbReference type="GO" id="GO:0009229">
    <property type="term" value="P:thiamine diphosphate biosynthetic process"/>
    <property type="evidence" value="ECO:0007669"/>
    <property type="project" value="UniProtKB-UniRule"/>
</dbReference>
<dbReference type="FunFam" id="3.20.20.540:FF:000001">
    <property type="entry name" value="Phosphomethylpyrimidine synthase"/>
    <property type="match status" value="1"/>
</dbReference>
<dbReference type="Gene3D" id="6.10.250.620">
    <property type="match status" value="1"/>
</dbReference>
<dbReference type="Gene3D" id="3.20.20.540">
    <property type="entry name" value="Radical SAM ThiC family, central domain"/>
    <property type="match status" value="1"/>
</dbReference>
<dbReference type="HAMAP" id="MF_00089">
    <property type="entry name" value="ThiC"/>
    <property type="match status" value="1"/>
</dbReference>
<dbReference type="InterPro" id="IPR037509">
    <property type="entry name" value="ThiC"/>
</dbReference>
<dbReference type="InterPro" id="IPR025747">
    <property type="entry name" value="ThiC-associated_dom"/>
</dbReference>
<dbReference type="InterPro" id="IPR038521">
    <property type="entry name" value="ThiC/Bza_core_dom"/>
</dbReference>
<dbReference type="InterPro" id="IPR002817">
    <property type="entry name" value="ThiC/BzaA/B"/>
</dbReference>
<dbReference type="NCBIfam" id="NF006763">
    <property type="entry name" value="PRK09284.1"/>
    <property type="match status" value="1"/>
</dbReference>
<dbReference type="NCBIfam" id="NF009895">
    <property type="entry name" value="PRK13352.1"/>
    <property type="match status" value="1"/>
</dbReference>
<dbReference type="NCBIfam" id="TIGR00190">
    <property type="entry name" value="thiC"/>
    <property type="match status" value="1"/>
</dbReference>
<dbReference type="PANTHER" id="PTHR30557:SF1">
    <property type="entry name" value="PHOSPHOMETHYLPYRIMIDINE SYNTHASE, CHLOROPLASTIC"/>
    <property type="match status" value="1"/>
</dbReference>
<dbReference type="PANTHER" id="PTHR30557">
    <property type="entry name" value="THIAMINE BIOSYNTHESIS PROTEIN THIC"/>
    <property type="match status" value="1"/>
</dbReference>
<dbReference type="Pfam" id="PF13667">
    <property type="entry name" value="ThiC-associated"/>
    <property type="match status" value="1"/>
</dbReference>
<dbReference type="Pfam" id="PF01964">
    <property type="entry name" value="ThiC_Rad_SAM"/>
    <property type="match status" value="1"/>
</dbReference>
<dbReference type="SFLD" id="SFLDF00407">
    <property type="entry name" value="phosphomethylpyrimidine_syntha"/>
    <property type="match status" value="1"/>
</dbReference>
<dbReference type="SFLD" id="SFLDG01114">
    <property type="entry name" value="phosphomethylpyrimidine_syntha"/>
    <property type="match status" value="1"/>
</dbReference>
<dbReference type="SFLD" id="SFLDS00113">
    <property type="entry name" value="Radical_SAM_Phosphomethylpyrim"/>
    <property type="match status" value="1"/>
</dbReference>
<reference key="1">
    <citation type="submission" date="2008-08" db="EMBL/GenBank/DDBJ databases">
        <title>Complete sequence of Vibrio fischeri strain MJ11.</title>
        <authorList>
            <person name="Mandel M.J."/>
            <person name="Stabb E.V."/>
            <person name="Ruby E.G."/>
            <person name="Ferriera S."/>
            <person name="Johnson J."/>
            <person name="Kravitz S."/>
            <person name="Beeson K."/>
            <person name="Sutton G."/>
            <person name="Rogers Y.-H."/>
            <person name="Friedman R."/>
            <person name="Frazier M."/>
            <person name="Venter J.C."/>
        </authorList>
    </citation>
    <scope>NUCLEOTIDE SEQUENCE [LARGE SCALE GENOMIC DNA]</scope>
    <source>
        <strain>MJ11</strain>
    </source>
</reference>
<proteinExistence type="inferred from homology"/>
<sequence>MSSSRKQARLDAKTNIESLSVQPYPNSNKVYIEGSRPDIRVPMREISLADSLVGGTKESPIFEPNEPIQVYDTSGVYTDPSYDIDVYRGLPKLRQEWIEERNDTELLDGVSSVYSQERLADETLDELRYGNLPTIRRAKQGQCVTQLHYARQGIITPEMEYIAIRENMGRQKFADEQLNHQHPGHSFGANLPKEITPEFVRKEVAEGRAIIPSNINHPEAEPMIIGRNFLIKVNANIGNSSVSSSIEEEVEKLVWSTRWGGDTVMDLSTGRNIHETREWILRNSPVPIGTVPMYQALEKVNGVAENLNWEVMRDTLIEQAEQGVDYFTIHAGLLLRYVPMTAKRVTGIVSRGGSIIAKWCLAHHQESFLYTHFREICEICAKYDVALSLGDGLRPGSVADANDEAQFAELRTLGELTKVAWEYDVQVIIEGPGHVPMHMIKENMDEQLKHCHEAPFYTLGPLTTDIAPGYDHITSGIGAAMIGWYGCAMLCYVTPKEHLGLPNKDDVKTGLITYKLAAHAGDLAKGHPGAQIRDNALSKARFEFRWEDQFNLSLDPITAREYHDETLPQESGKVAHFCSMCGPKFCSMKISQEVREYAKDSEQVALDQAIEIKMIDDPLEGMRQKSEEFKASGSELYHPAVEAE</sequence>